<proteinExistence type="evidence at protein level"/>
<protein>
    <recommendedName>
        <fullName>Transcription factor GATA-6</fullName>
    </recommendedName>
    <alternativeName>
        <fullName>GATA-binding factor 6</fullName>
    </alternativeName>
</protein>
<evidence type="ECO:0000250" key="1"/>
<evidence type="ECO:0000250" key="2">
    <source>
        <dbReference type="UniProtKB" id="Q61169"/>
    </source>
</evidence>
<evidence type="ECO:0000255" key="3">
    <source>
        <dbReference type="PROSITE-ProRule" id="PRU00094"/>
    </source>
</evidence>
<evidence type="ECO:0000256" key="4">
    <source>
        <dbReference type="SAM" id="MobiDB-lite"/>
    </source>
</evidence>
<evidence type="ECO:0000269" key="5">
    <source>
    </source>
</evidence>
<evidence type="ECO:0000269" key="6">
    <source>
    </source>
</evidence>
<evidence type="ECO:0000269" key="7">
    <source>
    </source>
</evidence>
<evidence type="ECO:0000269" key="8">
    <source>
    </source>
</evidence>
<evidence type="ECO:0000269" key="9">
    <source>
    </source>
</evidence>
<evidence type="ECO:0000269" key="10">
    <source>
    </source>
</evidence>
<evidence type="ECO:0000269" key="11">
    <source>
    </source>
</evidence>
<evidence type="ECO:0000269" key="12">
    <source>
    </source>
</evidence>
<evidence type="ECO:0000269" key="13">
    <source>
    </source>
</evidence>
<evidence type="ECO:0000269" key="14">
    <source>
    </source>
</evidence>
<evidence type="ECO:0000303" key="15">
    <source>
    </source>
</evidence>
<evidence type="ECO:0000303" key="16">
    <source>
    </source>
</evidence>
<evidence type="ECO:0000303" key="17">
    <source>
    </source>
</evidence>
<evidence type="ECO:0000305" key="18"/>
<evidence type="ECO:0007744" key="19">
    <source>
    </source>
</evidence>
<evidence type="ECO:0007744" key="20">
    <source>
    </source>
</evidence>
<feature type="chain" id="PRO_0000083423" description="Transcription factor GATA-6">
    <location>
        <begin position="1"/>
        <end position="595"/>
    </location>
</feature>
<feature type="zinc finger region" description="GATA-type 1" evidence="3">
    <location>
        <begin position="390"/>
        <end position="414"/>
    </location>
</feature>
<feature type="zinc finger region" description="GATA-type 2" evidence="3">
    <location>
        <begin position="444"/>
        <end position="468"/>
    </location>
</feature>
<feature type="region of interest" description="Disordered" evidence="4">
    <location>
        <begin position="14"/>
        <end position="71"/>
    </location>
</feature>
<feature type="region of interest" description="Disordered" evidence="4">
    <location>
        <begin position="208"/>
        <end position="255"/>
    </location>
</feature>
<feature type="region of interest" description="Disordered" evidence="4">
    <location>
        <begin position="286"/>
        <end position="339"/>
    </location>
</feature>
<feature type="region of interest" description="Disordered" evidence="4">
    <location>
        <begin position="482"/>
        <end position="561"/>
    </location>
</feature>
<feature type="compositionally biased region" description="Low complexity" evidence="4">
    <location>
        <begin position="14"/>
        <end position="27"/>
    </location>
</feature>
<feature type="compositionally biased region" description="Low complexity" evidence="4">
    <location>
        <begin position="39"/>
        <end position="48"/>
    </location>
</feature>
<feature type="compositionally biased region" description="Low complexity" evidence="4">
    <location>
        <begin position="211"/>
        <end position="235"/>
    </location>
</feature>
<feature type="compositionally biased region" description="Gly residues" evidence="4">
    <location>
        <begin position="236"/>
        <end position="253"/>
    </location>
</feature>
<feature type="compositionally biased region" description="Gly residues" evidence="4">
    <location>
        <begin position="286"/>
        <end position="298"/>
    </location>
</feature>
<feature type="compositionally biased region" description="Basic residues" evidence="4">
    <location>
        <begin position="323"/>
        <end position="334"/>
    </location>
</feature>
<feature type="compositionally biased region" description="Basic residues" evidence="4">
    <location>
        <begin position="490"/>
        <end position="499"/>
    </location>
</feature>
<feature type="compositionally biased region" description="Polar residues" evidence="4">
    <location>
        <begin position="500"/>
        <end position="538"/>
    </location>
</feature>
<feature type="modified residue" description="Phosphoserine" evidence="19">
    <location>
        <position position="268"/>
    </location>
</feature>
<feature type="cross-link" description="Glycyl lysine isopeptide (Lys-Gly) (interchain with G-Cter in SUMO2)" evidence="20">
    <location>
        <position position="429"/>
    </location>
</feature>
<feature type="cross-link" description="Glycyl lysine isopeptide (Lys-Gly) (interchain with G-Cter in SUMO2)" evidence="20">
    <location>
        <position position="473"/>
    </location>
</feature>
<feature type="cross-link" description="Glycyl lysine isopeptide (Lys-Gly) (interchain with G-Cter in SUMO2)" evidence="20">
    <location>
        <position position="484"/>
    </location>
</feature>
<feature type="splice variant" id="VSP_035778" description="In isoform 2." evidence="15 16 17">
    <location>
        <begin position="1"/>
        <end position="146"/>
    </location>
</feature>
<feature type="sequence variant" id="VAR_067380" description="In dbSNP:rs116262672." evidence="6 7 8 10">
    <original>G</original>
    <variation>R</variation>
    <location>
        <position position="15"/>
    </location>
</feature>
<feature type="sequence variant" id="VAR_078427" description="Found in patients with atrial fibrillation; likely pathogenic; gain of function; no effect on subcellular localization; dbSNP:rs766886560." evidence="12">
    <original>P</original>
    <variation>S</variation>
    <location>
        <position position="91"/>
    </location>
</feature>
<feature type="sequence variant" id="VAR_078428" description="Found in patients with atrial fibrillation; likely pathogenic; gain of function; no effect on subcellular localization; dbSNP:rs1263887431." evidence="12">
    <original>A</original>
    <variation>T</variation>
    <location>
        <position position="177"/>
    </location>
</feature>
<feature type="sequence variant" id="VAR_067381" description="In AVSD5; increased transcriptional activity; dbSNP:rs387906815." evidence="7">
    <original>A</original>
    <variation>V</variation>
    <location>
        <position position="178"/>
    </location>
</feature>
<feature type="sequence variant" id="VAR_067382" description="In ASD9 and TOF; loss of transcriptional activity; dbSNP:rs387906816." evidence="8">
    <original>S</original>
    <variation>N</variation>
    <location>
        <position position="184"/>
    </location>
</feature>
<feature type="sequence variant" id="VAR_067383" description="In TOF; uncertain significance; does not affect transcriptional activity; dbSNP:rs387906814." evidence="7">
    <original>L</original>
    <variation>V</variation>
    <location>
        <position position="198"/>
    </location>
</feature>
<feature type="sequence variant" id="VAR_078429" description="Found in patients with atrial fibrillation; likely pathogenic; significant loss of transcriptional activator activity." evidence="10">
    <original>Y</original>
    <variation>S</variation>
    <location>
        <position position="235"/>
    </location>
</feature>
<feature type="sequence variant" id="VAR_067384" description="In PACHD; dbSNP:rs387906817." evidence="9">
    <original>T</original>
    <variation>A</variation>
    <location>
        <position position="452"/>
    </location>
</feature>
<feature type="sequence variant" id="VAR_067385" description="In PACHD; loss of transcriptional activity; dbSNP:rs387906818." evidence="9">
    <original>R</original>
    <variation>C</variation>
    <location>
        <position position="456"/>
    </location>
</feature>
<feature type="sequence variant" id="VAR_067386" description="In PACHD; dbSNP:rs387906819." evidence="9">
    <original>R</original>
    <variation>H</variation>
    <location>
        <position position="456"/>
    </location>
</feature>
<feature type="sequence variant" id="VAR_067387" description="In PACHD; loss of transcriptional activity; dbSNP:rs387906813." evidence="9">
    <original>N</original>
    <variation>D</variation>
    <location>
        <position position="466"/>
    </location>
</feature>
<feature type="sequence variant" id="VAR_067388" description="In CTHM; persistent truncus arteriosus; loss of transcriptional activity; dbSNP:rs387906813." evidence="6">
    <original>N</original>
    <variation>H</variation>
    <location>
        <position position="466"/>
    </location>
</feature>
<feature type="sequence variant" id="VAR_067389" description="In PACHD; loss of transcriptional activity; dbSNP:rs387906820." evidence="9">
    <original>A</original>
    <variation>T</variation>
    <location>
        <position position="467"/>
    </location>
</feature>
<feature type="sequence variant" id="VAR_078430" description="Found in patients with atrial fibrillation; likely pathogenic; significant loss of transcriptional activator activity." evidence="11">
    <original>G</original>
    <variation>V</variation>
    <location>
        <position position="469"/>
    </location>
</feature>
<feature type="sequence variant" id="VAR_067390" description="In PACHD; loss of transcriptional activity." evidence="9">
    <original>K</original>
    <variation>Q</variation>
    <location>
        <position position="473"/>
    </location>
</feature>
<feature type="sequence variant" id="VAR_078431" description="Found in patients with atrial fibrillation; likely pathogenic; gain of function; no effect on subcellular localization; dbSNP:rs761668180." evidence="12">
    <original>A</original>
    <variation>G</variation>
    <location>
        <position position="543"/>
    </location>
</feature>
<feature type="sequence variant" id="VAR_078432" description="Found in patients with atrial fibrillation; likely pathogenic; gain of function; no effect on subcellular localization; dbSNP:rs201707559." evidence="12">
    <original>R</original>
    <variation>L</variation>
    <location>
        <position position="585"/>
    </location>
</feature>
<feature type="sequence conflict" description="In Ref. 2; CAA64997." evidence="18" ref="2">
    <original>G</original>
    <variation>V</variation>
    <location>
        <position position="281"/>
    </location>
</feature>
<organism>
    <name type="scientific">Homo sapiens</name>
    <name type="common">Human</name>
    <dbReference type="NCBI Taxonomy" id="9606"/>
    <lineage>
        <taxon>Eukaryota</taxon>
        <taxon>Metazoa</taxon>
        <taxon>Chordata</taxon>
        <taxon>Craniata</taxon>
        <taxon>Vertebrata</taxon>
        <taxon>Euteleostomi</taxon>
        <taxon>Mammalia</taxon>
        <taxon>Eutheria</taxon>
        <taxon>Euarchontoglires</taxon>
        <taxon>Primates</taxon>
        <taxon>Haplorrhini</taxon>
        <taxon>Catarrhini</taxon>
        <taxon>Hominidae</taxon>
        <taxon>Homo</taxon>
    </lineage>
</organism>
<gene>
    <name type="primary">GATA6</name>
</gene>
<keyword id="KW-0010">Activator</keyword>
<keyword id="KW-0024">Alternative initiation</keyword>
<keyword id="KW-0976">Atrial septal defect</keyword>
<keyword id="KW-0225">Disease variant</keyword>
<keyword id="KW-0238">DNA-binding</keyword>
<keyword id="KW-1017">Isopeptide bond</keyword>
<keyword id="KW-0479">Metal-binding</keyword>
<keyword id="KW-0539">Nucleus</keyword>
<keyword id="KW-0597">Phosphoprotein</keyword>
<keyword id="KW-1267">Proteomics identification</keyword>
<keyword id="KW-1185">Reference proteome</keyword>
<keyword id="KW-0677">Repeat</keyword>
<keyword id="KW-0804">Transcription</keyword>
<keyword id="KW-0805">Transcription regulation</keyword>
<keyword id="KW-0832">Ubl conjugation</keyword>
<keyword id="KW-0862">Zinc</keyword>
<keyword id="KW-0863">Zinc-finger</keyword>
<accession>Q92908</accession>
<accession>B0YJ17</accession>
<accession>P78327</accession>
<sequence>MALTDGGWCLPKRFGAAGADASDSRAFPAREPSTPPSPISSSSSSCSRGGERGPGGASNCGTPQLDTEAAAGPPARSLLLSSYASHPFGAPHGPSAPGVAGPGGNLSSWEDLLLFTDLDQAATASKLLWSSRGAKLSPFAPEQPEEMYQTLAALSSQGPAAYDGAPGGFVHSAAAAAAAAAAASSPVYVPTTRVGSMLPGLPYHLQGSGSGPANHAGGAGAHPGWPQASADSPPYGSGGGAAGGGAAGPGGAGSAAAHVSARFPYSPSPPMANGAAREPGGYAAAGSGGAGGVSGGGSSLAAMGGREPQYSSLSAARPLNGTYHHHHHHHHHHPSPYSPYVGAPLTPAWPAGPFETPVLHSLQSRAGAPLPVPRGPSADLLEDLSESRECVNCGSIQTPLWRRDGTGHYLCNACGLYSKMNGLSRPLIKPQKRVPSSRRLGLSCANCHTTTTTLWRRNAEGEPVCNACGLYMKLHGVPRPLAMKKEGIQTRKRKPKNINKSKTCSGNSNNSIPMTPTSTSSNSDDCSKNTSPTTQPTASGAGAPVMTGAGESTNPENSELKYSGQDGLYIGVSLASPAEVTSSVRPDSWCALALA</sequence>
<comment type="function">
    <text evidence="2 5 6 10 11 12 13 14">Transcriptional activator (PubMed:19666519, PubMed:22750565, PubMed:22824924, PubMed:27756709). Regulates SEMA3C and PLXNA2 (PubMed:19666519). Involved in gene regulation specifically in the gastric epithelium (PubMed:9315713). May regulate genes that protect epithelial cells from bacterial infection (PubMed:16968778). Involved in bone morphogenetic protein (BMP)-mediated cardiac-specific gene expression (By similarity). Binds to BMP response element (BMPRE) DNA sequences within cardiac activating regions (By similarity). In human skin, controls several physiological processes contributing to homeostasis of the upper pilosebaceous unit. Triggers ductal and sebaceous differentiation as well as limits cell proliferation and lipid production to prevent hyperseborrhoea. Mediates the effects of retinoic acid on sebocyte proliferation, differentiation and lipid production. Also contributes to immune regulation of sebocytes and antimicrobial responses by modulating the expression of anti-inflammatory genes such as IL10 and pro-inflammatory genes such as IL6, TLR2, TLR4, and IFNG. Activates TGFB1 signaling which controls the interfollicular epidermis fate (PubMed:33082341).</text>
</comment>
<comment type="subunit">
    <text evidence="1">Interacts with LMCD1.</text>
</comment>
<comment type="subcellular location">
    <subcellularLocation>
        <location evidence="6 12">Nucleus</location>
    </subcellularLocation>
</comment>
<comment type="alternative products">
    <event type="alternative initiation"/>
    <isoform>
        <id>Q92908-1</id>
        <name>1</name>
        <sequence type="displayed"/>
    </isoform>
    <isoform>
        <id>Q92908-2</id>
        <name>2</name>
        <sequence type="described" ref="VSP_035778"/>
    </isoform>
</comment>
<comment type="tissue specificity">
    <text evidence="13">Expressed in heart, gut and gut-derived tissues. Expressed in skin upper pilosebaceous unit. Expression is decreased or lost in acne lesions (PubMed:33082341).</text>
</comment>
<comment type="induction">
    <text evidence="13">In sebocytes, expression is up-regulated by Cutibacterium acnes.</text>
</comment>
<comment type="domain">
    <text evidence="1">The GATA-type zinc fingers mediate interaction with LMCD1.</text>
</comment>
<comment type="disease">
    <text evidence="10 11 12">Rare variants in GATA6 may be a cause of susceptibility to atrial fibrillation, a common sustained cardiac rhythm disturbance. Atrial fibrillation is characterized by disorganized atrial electrical activity and ineffective atrial contraction promoting blood stasis in the atria and reduces ventricular filling. It can result in palpitations, syncope, thromboembolic stroke, and congestive heart failure.</text>
</comment>
<comment type="disease" evidence="6">
    <disease id="DI-01424">
        <name>Conotruncal heart malformations</name>
        <acronym>CTHM</acronym>
        <description>A group of congenital heart defects involving the outflow tracts. Examples include truncus arteriosus communis, double-outlet right ventricle and transposition of great arteries. Truncus arteriosus communis is characterized by a single outflow tract instead of a separate aorta and pulmonary artery. In transposition of the great arteries, the aorta arises from the right ventricle and the pulmonary artery from the left ventricle. In double outlet of the right ventricle, both the pulmonary artery and aorta arise from the right ventricle.</description>
        <dbReference type="MIM" id="217095"/>
    </disease>
    <text evidence="6">The disease is caused by variants affecting the gene represented in this entry. GATA6 mutations have been found in patients with non-syndromic persistent truncus arteriosus (PubMed:19666519).</text>
</comment>
<comment type="disease" evidence="8">
    <disease id="DI-03370">
        <name>Atrial septal defect 9</name>
        <acronym>ASD9</acronym>
        <description>A congenital heart malformation characterized by incomplete closure of the wall between the atria resulting in blood flow from the left to the right atria. Some patients manifest tricuspid valve disease, pulmonary valve disease, and pulmonary artery hypertension.</description>
        <dbReference type="MIM" id="614475"/>
    </disease>
    <text>The disease is caused by variants affecting the gene represented in this entry.</text>
</comment>
<comment type="disease" evidence="7 8">
    <disease id="DI-02362">
        <name>Tetralogy of Fallot</name>
        <acronym>TOF</acronym>
        <description>A congenital heart anomaly which consists of pulmonary stenosis, ventricular septal defect, dextroposition of the aorta (aorta is on the right side instead of the left) and hypertrophy of the right ventricle. In this condition, blood from both ventricles (oxygen-rich and oxygen-poor) is pumped into the body often causing cyanosis.</description>
        <dbReference type="MIM" id="187500"/>
    </disease>
    <text>The disease is caused by variants affecting the gene represented in this entry.</text>
</comment>
<comment type="disease" evidence="7">
    <disease id="DI-03369">
        <name>Atrioventricular septal defect 5</name>
        <acronym>AVSD5</acronym>
        <description>A congenital heart malformation characterized by a common atrioventricular junction coexisting with deficient atrioventricular septation. The complete form involves underdevelopment of the lower part of the atrial septum and the upper part of the ventricular septum; the valve itself is also shared. A less severe form, known as ostium primum atrial septal defect, is characterized by separate atrioventricular valvar orifices despite a common junction.</description>
        <dbReference type="MIM" id="614474"/>
    </disease>
    <text>The disease is caused by variants affecting the gene represented in this entry.</text>
</comment>
<comment type="disease" evidence="9">
    <disease id="DI-03371">
        <name>Pancreatic agenesis and congenital heart defects</name>
        <acronym>PACHD</acronym>
        <description>An autosomal dominant disease characterized by pancreatic severe hypoplasia or agenesis, diabetes mellitus, and congenital heart abnormalities including ventricular septal defect, patent ductus arteriosus, pulmonary artery stenosis, truncus arteriosus and tetralogy of Fallot.</description>
        <dbReference type="MIM" id="600001"/>
    </disease>
    <text>The disease is caused by variants affecting the gene represented in this entry.</text>
</comment>
<comment type="miscellaneous">
    <molecule>Isoform 2</molecule>
    <text evidence="18">Produced by alternative initiation at Met-147 of isoform 1.</text>
</comment>
<comment type="online information" name="Atlas of Genetics and Cytogenetics in Oncology and Haematology">
    <link uri="https://atlasgeneticsoncology.org/gene/40690/GATA6"/>
</comment>
<dbReference type="EMBL" id="U66075">
    <property type="protein sequence ID" value="AAC50941.1"/>
    <property type="molecule type" value="mRNA"/>
</dbReference>
<dbReference type="EMBL" id="X95701">
    <property type="protein sequence ID" value="CAA64997.1"/>
    <property type="molecule type" value="mRNA"/>
</dbReference>
<dbReference type="EMBL" id="D87811">
    <property type="protein sequence ID" value="BAA22621.1"/>
    <property type="molecule type" value="mRNA"/>
</dbReference>
<dbReference type="EMBL" id="EF444980">
    <property type="protein sequence ID" value="ACA05995.1"/>
    <property type="molecule type" value="Genomic_DNA"/>
</dbReference>
<dbReference type="EMBL" id="AC091588">
    <property type="status" value="NOT_ANNOTATED_CDS"/>
    <property type="molecule type" value="Genomic_DNA"/>
</dbReference>
<dbReference type="EMBL" id="CH471088">
    <property type="protein sequence ID" value="EAX01137.1"/>
    <property type="molecule type" value="Genomic_DNA"/>
</dbReference>
<dbReference type="CCDS" id="CCDS11872.1">
    <molecule id="Q92908-1"/>
</dbReference>
<dbReference type="RefSeq" id="NP_005248.2">
    <molecule id="Q92908-1"/>
    <property type="nucleotide sequence ID" value="NM_005257.5"/>
</dbReference>
<dbReference type="RefSeq" id="XP_047293439.1">
    <molecule id="Q92908-1"/>
    <property type="nucleotide sequence ID" value="XM_047437483.1"/>
</dbReference>
<dbReference type="SMR" id="Q92908"/>
<dbReference type="BioGRID" id="108897">
    <property type="interactions" value="21"/>
</dbReference>
<dbReference type="FunCoup" id="Q92908">
    <property type="interactions" value="1694"/>
</dbReference>
<dbReference type="IntAct" id="Q92908">
    <property type="interactions" value="8"/>
</dbReference>
<dbReference type="MINT" id="Q92908"/>
<dbReference type="STRING" id="9606.ENSP00000269216"/>
<dbReference type="GlyGen" id="Q92908">
    <property type="glycosylation" value="1 site, 1 O-linked glycan (1 site)"/>
</dbReference>
<dbReference type="iPTMnet" id="Q92908"/>
<dbReference type="PhosphoSitePlus" id="Q92908"/>
<dbReference type="BioMuta" id="GATA6"/>
<dbReference type="DMDM" id="215273987"/>
<dbReference type="jPOST" id="Q92908"/>
<dbReference type="MassIVE" id="Q92908"/>
<dbReference type="PaxDb" id="9606-ENSP00000269216"/>
<dbReference type="PeptideAtlas" id="Q92908"/>
<dbReference type="ProteomicsDB" id="75592">
    <molecule id="Q92908-1"/>
</dbReference>
<dbReference type="ProteomicsDB" id="75593">
    <molecule id="Q92908-2"/>
</dbReference>
<dbReference type="Pumba" id="Q92908"/>
<dbReference type="Antibodypedia" id="22009">
    <property type="antibodies" value="506 antibodies from 36 providers"/>
</dbReference>
<dbReference type="DNASU" id="2627"/>
<dbReference type="Ensembl" id="ENST00000269216.10">
    <molecule id="Q92908-1"/>
    <property type="protein sequence ID" value="ENSP00000269216.3"/>
    <property type="gene ID" value="ENSG00000141448.11"/>
</dbReference>
<dbReference type="Ensembl" id="ENST00000581694.1">
    <molecule id="Q92908-1"/>
    <property type="protein sequence ID" value="ENSP00000462313.1"/>
    <property type="gene ID" value="ENSG00000141448.11"/>
</dbReference>
<dbReference type="GeneID" id="2627"/>
<dbReference type="KEGG" id="hsa:2627"/>
<dbReference type="MANE-Select" id="ENST00000269216.10">
    <property type="protein sequence ID" value="ENSP00000269216.3"/>
    <property type="RefSeq nucleotide sequence ID" value="NM_005257.6"/>
    <property type="RefSeq protein sequence ID" value="NP_005248.2"/>
</dbReference>
<dbReference type="UCSC" id="uc002ktt.2">
    <molecule id="Q92908-1"/>
    <property type="organism name" value="human"/>
</dbReference>
<dbReference type="AGR" id="HGNC:4174"/>
<dbReference type="CTD" id="2627"/>
<dbReference type="DisGeNET" id="2627"/>
<dbReference type="GeneCards" id="GATA6"/>
<dbReference type="GeneReviews" id="GATA6"/>
<dbReference type="HGNC" id="HGNC:4174">
    <property type="gene designation" value="GATA6"/>
</dbReference>
<dbReference type="HPA" id="ENSG00000141448">
    <property type="expression patterns" value="Tissue enhanced (adrenal gland, ovary)"/>
</dbReference>
<dbReference type="MalaCards" id="GATA6"/>
<dbReference type="MIM" id="187500">
    <property type="type" value="phenotype"/>
</dbReference>
<dbReference type="MIM" id="217095">
    <property type="type" value="phenotype"/>
</dbReference>
<dbReference type="MIM" id="600001">
    <property type="type" value="phenotype"/>
</dbReference>
<dbReference type="MIM" id="601656">
    <property type="type" value="gene"/>
</dbReference>
<dbReference type="MIM" id="614474">
    <property type="type" value="phenotype"/>
</dbReference>
<dbReference type="MIM" id="614475">
    <property type="type" value="phenotype"/>
</dbReference>
<dbReference type="neXtProt" id="NX_Q92908"/>
<dbReference type="OpenTargets" id="ENSG00000141448"/>
<dbReference type="Orphanet" id="99103">
    <property type="disease" value="Atrial septal defect, ostium secundum type"/>
</dbReference>
<dbReference type="Orphanet" id="99067">
    <property type="disease" value="Complete atrioventricular septal defect with ventricular hypoplasia"/>
</dbReference>
<dbReference type="Orphanet" id="2140">
    <property type="disease" value="Congenital diaphragmatic hernia"/>
</dbReference>
<dbReference type="Orphanet" id="334">
    <property type="disease" value="Familial atrial fibrillation"/>
</dbReference>
<dbReference type="Orphanet" id="2255">
    <property type="disease" value="Pancreatic hypoplasia-diabetes-congenital heart disease syndrome"/>
</dbReference>
<dbReference type="Orphanet" id="3303">
    <property type="disease" value="Tetralogy of Fallot"/>
</dbReference>
<dbReference type="PharmGKB" id="PA28589"/>
<dbReference type="VEuPathDB" id="HostDB:ENSG00000141448"/>
<dbReference type="eggNOG" id="KOG1601">
    <property type="taxonomic scope" value="Eukaryota"/>
</dbReference>
<dbReference type="GeneTree" id="ENSGT00940000160814"/>
<dbReference type="HOGENOM" id="CLU_027524_0_0_1"/>
<dbReference type="InParanoid" id="Q92908"/>
<dbReference type="OMA" id="ENSMLHC"/>
<dbReference type="OrthoDB" id="515401at2759"/>
<dbReference type="PAN-GO" id="Q92908">
    <property type="GO annotations" value="6 GO annotations based on evolutionary models"/>
</dbReference>
<dbReference type="PhylomeDB" id="Q92908"/>
<dbReference type="TreeFam" id="TF315391"/>
<dbReference type="PathwayCommons" id="Q92908"/>
<dbReference type="Reactome" id="R-HSA-5683826">
    <property type="pathway name" value="Surfactant metabolism"/>
</dbReference>
<dbReference type="Reactome" id="R-HSA-9733709">
    <property type="pathway name" value="Cardiogenesis"/>
</dbReference>
<dbReference type="Reactome" id="R-HSA-9823730">
    <property type="pathway name" value="Formation of definitive endoderm"/>
</dbReference>
<dbReference type="Reactome" id="R-HSA-983231">
    <property type="pathway name" value="Factors involved in megakaryocyte development and platelet production"/>
</dbReference>
<dbReference type="Reactome" id="R-HSA-9925561">
    <property type="pathway name" value="Developmental Lineage of Pancreatic Acinar Cells"/>
</dbReference>
<dbReference type="SignaLink" id="Q92908"/>
<dbReference type="SIGNOR" id="Q92908"/>
<dbReference type="BioGRID-ORCS" id="2627">
    <property type="hits" value="33 hits in 1174 CRISPR screens"/>
</dbReference>
<dbReference type="ChiTaRS" id="GATA6">
    <property type="organism name" value="human"/>
</dbReference>
<dbReference type="GeneWiki" id="GATA6"/>
<dbReference type="GenomeRNAi" id="2627"/>
<dbReference type="Pharos" id="Q92908">
    <property type="development level" value="Tbio"/>
</dbReference>
<dbReference type="PRO" id="PR:Q92908"/>
<dbReference type="Proteomes" id="UP000005640">
    <property type="component" value="Chromosome 18"/>
</dbReference>
<dbReference type="RNAct" id="Q92908">
    <property type="molecule type" value="protein"/>
</dbReference>
<dbReference type="Bgee" id="ENSG00000141448">
    <property type="expression patterns" value="Expressed in germinal epithelium of ovary and 136 other cell types or tissues"/>
</dbReference>
<dbReference type="GO" id="GO:0000785">
    <property type="term" value="C:chromatin"/>
    <property type="evidence" value="ECO:0000247"/>
    <property type="project" value="NTNU_SB"/>
</dbReference>
<dbReference type="GO" id="GO:0031965">
    <property type="term" value="C:nuclear membrane"/>
    <property type="evidence" value="ECO:0000314"/>
    <property type="project" value="HPA"/>
</dbReference>
<dbReference type="GO" id="GO:0005654">
    <property type="term" value="C:nucleoplasm"/>
    <property type="evidence" value="ECO:0000314"/>
    <property type="project" value="HPA"/>
</dbReference>
<dbReference type="GO" id="GO:0005634">
    <property type="term" value="C:nucleus"/>
    <property type="evidence" value="ECO:0000314"/>
    <property type="project" value="UniProtKB"/>
</dbReference>
<dbReference type="GO" id="GO:0005667">
    <property type="term" value="C:transcription regulator complex"/>
    <property type="evidence" value="ECO:0007669"/>
    <property type="project" value="Ensembl"/>
</dbReference>
<dbReference type="GO" id="GO:0003682">
    <property type="term" value="F:chromatin binding"/>
    <property type="evidence" value="ECO:0007669"/>
    <property type="project" value="Ensembl"/>
</dbReference>
<dbReference type="GO" id="GO:0003700">
    <property type="term" value="F:DNA-binding transcription factor activity"/>
    <property type="evidence" value="ECO:0000314"/>
    <property type="project" value="UniProtKB"/>
</dbReference>
<dbReference type="GO" id="GO:0000981">
    <property type="term" value="F:DNA-binding transcription factor activity, RNA polymerase II-specific"/>
    <property type="evidence" value="ECO:0000315"/>
    <property type="project" value="UniProtKB"/>
</dbReference>
<dbReference type="GO" id="GO:0140297">
    <property type="term" value="F:DNA-binding transcription factor binding"/>
    <property type="evidence" value="ECO:0000353"/>
    <property type="project" value="UniProtKB"/>
</dbReference>
<dbReference type="GO" id="GO:0051525">
    <property type="term" value="F:NFAT protein binding"/>
    <property type="evidence" value="ECO:0000353"/>
    <property type="project" value="UniProtKB"/>
</dbReference>
<dbReference type="GO" id="GO:0019901">
    <property type="term" value="F:protein kinase binding"/>
    <property type="evidence" value="ECO:0000353"/>
    <property type="project" value="UniProtKB"/>
</dbReference>
<dbReference type="GO" id="GO:0000978">
    <property type="term" value="F:RNA polymerase II cis-regulatory region sequence-specific DNA binding"/>
    <property type="evidence" value="ECO:0000318"/>
    <property type="project" value="GO_Central"/>
</dbReference>
<dbReference type="GO" id="GO:1990837">
    <property type="term" value="F:sequence-specific double-stranded DNA binding"/>
    <property type="evidence" value="ECO:0000314"/>
    <property type="project" value="ARUK-UCL"/>
</dbReference>
<dbReference type="GO" id="GO:0000976">
    <property type="term" value="F:transcription cis-regulatory region binding"/>
    <property type="evidence" value="ECO:0000314"/>
    <property type="project" value="UniProtKB"/>
</dbReference>
<dbReference type="GO" id="GO:0001223">
    <property type="term" value="F:transcription coactivator binding"/>
    <property type="evidence" value="ECO:0000353"/>
    <property type="project" value="UniProtKB"/>
</dbReference>
<dbReference type="GO" id="GO:0008270">
    <property type="term" value="F:zinc ion binding"/>
    <property type="evidence" value="ECO:0007669"/>
    <property type="project" value="UniProtKB-KW"/>
</dbReference>
<dbReference type="GO" id="GO:0048645">
    <property type="term" value="P:animal organ formation"/>
    <property type="evidence" value="ECO:0007669"/>
    <property type="project" value="Ensembl"/>
</dbReference>
<dbReference type="GO" id="GO:0036302">
    <property type="term" value="P:atrioventricular canal development"/>
    <property type="evidence" value="ECO:0000303"/>
    <property type="project" value="BHF-UCL"/>
</dbReference>
<dbReference type="GO" id="GO:0003162">
    <property type="term" value="P:atrioventricular node development"/>
    <property type="evidence" value="ECO:0000303"/>
    <property type="project" value="BHF-UCL"/>
</dbReference>
<dbReference type="GO" id="GO:0055007">
    <property type="term" value="P:cardiac muscle cell differentiation"/>
    <property type="evidence" value="ECO:0007669"/>
    <property type="project" value="Ensembl"/>
</dbReference>
<dbReference type="GO" id="GO:0060038">
    <property type="term" value="P:cardiac muscle cell proliferation"/>
    <property type="evidence" value="ECO:0007669"/>
    <property type="project" value="Ensembl"/>
</dbReference>
<dbReference type="GO" id="GO:0014898">
    <property type="term" value="P:cardiac muscle hypertrophy in response to stress"/>
    <property type="evidence" value="ECO:0007669"/>
    <property type="project" value="Ensembl"/>
</dbReference>
<dbReference type="GO" id="GO:0060947">
    <property type="term" value="P:cardiac vascular smooth muscle cell differentiation"/>
    <property type="evidence" value="ECO:0000315"/>
    <property type="project" value="UniProtKB"/>
</dbReference>
<dbReference type="GO" id="GO:0045165">
    <property type="term" value="P:cell fate commitment"/>
    <property type="evidence" value="ECO:0000318"/>
    <property type="project" value="GO_Central"/>
</dbReference>
<dbReference type="GO" id="GO:0071773">
    <property type="term" value="P:cellular response to BMP stimulus"/>
    <property type="evidence" value="ECO:0007669"/>
    <property type="project" value="Ensembl"/>
</dbReference>
<dbReference type="GO" id="GO:0071371">
    <property type="term" value="P:cellular response to gonadotropin stimulus"/>
    <property type="evidence" value="ECO:0007669"/>
    <property type="project" value="Ensembl"/>
</dbReference>
<dbReference type="GO" id="GO:0071456">
    <property type="term" value="P:cellular response to hypoxia"/>
    <property type="evidence" value="ECO:0000314"/>
    <property type="project" value="UniProtKB"/>
</dbReference>
<dbReference type="GO" id="GO:0060486">
    <property type="term" value="P:club cell differentiation"/>
    <property type="evidence" value="ECO:0007669"/>
    <property type="project" value="Ensembl"/>
</dbReference>
<dbReference type="GO" id="GO:0007493">
    <property type="term" value="P:endodermal cell fate determination"/>
    <property type="evidence" value="ECO:0007669"/>
    <property type="project" value="Ensembl"/>
</dbReference>
<dbReference type="GO" id="GO:0030855">
    <property type="term" value="P:epithelial cell differentiation"/>
    <property type="evidence" value="ECO:0000318"/>
    <property type="project" value="GO_Central"/>
</dbReference>
<dbReference type="GO" id="GO:0070315">
    <property type="term" value="P:G1 to G0 transition involved in cell differentiation"/>
    <property type="evidence" value="ECO:0000314"/>
    <property type="project" value="UniProtKB"/>
</dbReference>
<dbReference type="GO" id="GO:0010467">
    <property type="term" value="P:gene expression"/>
    <property type="evidence" value="ECO:0007669"/>
    <property type="project" value="Ensembl"/>
</dbReference>
<dbReference type="GO" id="GO:0060047">
    <property type="term" value="P:heart contraction"/>
    <property type="evidence" value="ECO:0007669"/>
    <property type="project" value="Ensembl"/>
</dbReference>
<dbReference type="GO" id="GO:0001701">
    <property type="term" value="P:in utero embryonic development"/>
    <property type="evidence" value="ECO:0007669"/>
    <property type="project" value="Ensembl"/>
</dbReference>
<dbReference type="GO" id="GO:0060575">
    <property type="term" value="P:intestinal epithelial cell differentiation"/>
    <property type="evidence" value="ECO:0000314"/>
    <property type="project" value="MGI"/>
</dbReference>
<dbReference type="GO" id="GO:0001889">
    <property type="term" value="P:liver development"/>
    <property type="evidence" value="ECO:0007669"/>
    <property type="project" value="Ensembl"/>
</dbReference>
<dbReference type="GO" id="GO:0060430">
    <property type="term" value="P:lung saccule development"/>
    <property type="evidence" value="ECO:0007669"/>
    <property type="project" value="Ensembl"/>
</dbReference>
<dbReference type="GO" id="GO:0008584">
    <property type="term" value="P:male gonad development"/>
    <property type="evidence" value="ECO:0000270"/>
    <property type="project" value="UniProtKB"/>
</dbReference>
<dbReference type="GO" id="GO:0043066">
    <property type="term" value="P:negative regulation of apoptotic process"/>
    <property type="evidence" value="ECO:0000315"/>
    <property type="project" value="UniProtKB"/>
</dbReference>
<dbReference type="GO" id="GO:0045892">
    <property type="term" value="P:negative regulation of DNA-templated transcription"/>
    <property type="evidence" value="ECO:0000314"/>
    <property type="project" value="UniProtKB"/>
</dbReference>
<dbReference type="GO" id="GO:1904003">
    <property type="term" value="P:negative regulation of sebum secreting cell proliferation"/>
    <property type="evidence" value="ECO:0000314"/>
    <property type="project" value="UniProtKB"/>
</dbReference>
<dbReference type="GO" id="GO:0000122">
    <property type="term" value="P:negative regulation of transcription by RNA polymerase II"/>
    <property type="evidence" value="ECO:0000314"/>
    <property type="project" value="UniProtKB"/>
</dbReference>
<dbReference type="GO" id="GO:0032911">
    <property type="term" value="P:negative regulation of transforming growth factor beta1 production"/>
    <property type="evidence" value="ECO:0000315"/>
    <property type="project" value="UniProtKB"/>
</dbReference>
<dbReference type="GO" id="GO:0032912">
    <property type="term" value="P:negative regulation of transforming growth factor beta2 production"/>
    <property type="evidence" value="ECO:0000315"/>
    <property type="project" value="UniProtKB"/>
</dbReference>
<dbReference type="GO" id="GO:0003148">
    <property type="term" value="P:outflow tract septum morphogenesis"/>
    <property type="evidence" value="ECO:0000315"/>
    <property type="project" value="BHF-UCL"/>
</dbReference>
<dbReference type="GO" id="GO:0003310">
    <property type="term" value="P:pancreatic A cell differentiation"/>
    <property type="evidence" value="ECO:0007669"/>
    <property type="project" value="Ensembl"/>
</dbReference>
<dbReference type="GO" id="GO:0006644">
    <property type="term" value="P:phospholipid metabolic process"/>
    <property type="evidence" value="ECO:0007669"/>
    <property type="project" value="Ensembl"/>
</dbReference>
<dbReference type="GO" id="GO:0045766">
    <property type="term" value="P:positive regulation of angiogenesis"/>
    <property type="evidence" value="ECO:0000314"/>
    <property type="project" value="UniProtKB"/>
</dbReference>
<dbReference type="GO" id="GO:0060045">
    <property type="term" value="P:positive regulation of cardiac muscle cell proliferation"/>
    <property type="evidence" value="ECO:0007669"/>
    <property type="project" value="Ensembl"/>
</dbReference>
<dbReference type="GO" id="GO:0110024">
    <property type="term" value="P:positive regulation of cardiac muscle myoblast proliferation"/>
    <property type="evidence" value="ECO:0000314"/>
    <property type="project" value="BHF-UCL"/>
</dbReference>
<dbReference type="GO" id="GO:0045893">
    <property type="term" value="P:positive regulation of DNA-templated transcription"/>
    <property type="evidence" value="ECO:0000315"/>
    <property type="project" value="UniProtKB"/>
</dbReference>
<dbReference type="GO" id="GO:0045944">
    <property type="term" value="P:positive regulation of transcription by RNA polymerase II"/>
    <property type="evidence" value="ECO:0000314"/>
    <property type="project" value="UniProtKB"/>
</dbReference>
<dbReference type="GO" id="GO:0002759">
    <property type="term" value="P:regulation of antimicrobial humoral response"/>
    <property type="evidence" value="ECO:0000314"/>
    <property type="project" value="UniProtKB"/>
</dbReference>
<dbReference type="GO" id="GO:0043627">
    <property type="term" value="P:response to estrogen"/>
    <property type="evidence" value="ECO:0007669"/>
    <property type="project" value="Ensembl"/>
</dbReference>
<dbReference type="GO" id="GO:0070848">
    <property type="term" value="P:response to growth factor"/>
    <property type="evidence" value="ECO:0000314"/>
    <property type="project" value="UniProtKB"/>
</dbReference>
<dbReference type="GO" id="GO:0032526">
    <property type="term" value="P:response to retinoic acid"/>
    <property type="evidence" value="ECO:0000314"/>
    <property type="project" value="UniProtKB"/>
</dbReference>
<dbReference type="GO" id="GO:0009410">
    <property type="term" value="P:response to xenobiotic stimulus"/>
    <property type="evidence" value="ECO:0000315"/>
    <property type="project" value="UniProtKB"/>
</dbReference>
<dbReference type="GO" id="GO:0001949">
    <property type="term" value="P:sebaceous gland cell differentiation"/>
    <property type="evidence" value="ECO:0000314"/>
    <property type="project" value="UniProtKB"/>
</dbReference>
<dbReference type="GO" id="GO:0003163">
    <property type="term" value="P:sinoatrial node development"/>
    <property type="evidence" value="ECO:0007669"/>
    <property type="project" value="Ensembl"/>
</dbReference>
<dbReference type="GO" id="GO:0098773">
    <property type="term" value="P:skin epidermis development"/>
    <property type="evidence" value="ECO:0000314"/>
    <property type="project" value="UniProtKB"/>
</dbReference>
<dbReference type="GO" id="GO:0051145">
    <property type="term" value="P:smooth muscle cell differentiation"/>
    <property type="evidence" value="ECO:0000315"/>
    <property type="project" value="UniProtKB"/>
</dbReference>
<dbReference type="GO" id="GO:0048863">
    <property type="term" value="P:stem cell differentiation"/>
    <property type="evidence" value="ECO:0007669"/>
    <property type="project" value="Ensembl"/>
</dbReference>
<dbReference type="GO" id="GO:0035239">
    <property type="term" value="P:tube morphogenesis"/>
    <property type="evidence" value="ECO:0007669"/>
    <property type="project" value="Ensembl"/>
</dbReference>
<dbReference type="GO" id="GO:0003309">
    <property type="term" value="P:type B pancreatic cell differentiation"/>
    <property type="evidence" value="ECO:0007669"/>
    <property type="project" value="Ensembl"/>
</dbReference>
<dbReference type="GO" id="GO:0060510">
    <property type="term" value="P:type II pneumocyte differentiation"/>
    <property type="evidence" value="ECO:0007669"/>
    <property type="project" value="Ensembl"/>
</dbReference>
<dbReference type="CDD" id="cd00202">
    <property type="entry name" value="ZnF_GATA"/>
    <property type="match status" value="2"/>
</dbReference>
<dbReference type="FunFam" id="3.30.50.10:FF:000001">
    <property type="entry name" value="GATA transcription factor (GATAd)"/>
    <property type="match status" value="1"/>
</dbReference>
<dbReference type="FunFam" id="3.30.50.10:FF:000032">
    <property type="entry name" value="Transcription factor GATA-3"/>
    <property type="match status" value="1"/>
</dbReference>
<dbReference type="Gene3D" id="3.30.50.10">
    <property type="entry name" value="Erythroid Transcription Factor GATA-1, subunit A"/>
    <property type="match status" value="2"/>
</dbReference>
<dbReference type="InterPro" id="IPR008013">
    <property type="entry name" value="GATA_N"/>
</dbReference>
<dbReference type="InterPro" id="IPR039355">
    <property type="entry name" value="Transcription_factor_GATA"/>
</dbReference>
<dbReference type="InterPro" id="IPR000679">
    <property type="entry name" value="Znf_GATA"/>
</dbReference>
<dbReference type="InterPro" id="IPR013088">
    <property type="entry name" value="Znf_NHR/GATA"/>
</dbReference>
<dbReference type="PANTHER" id="PTHR10071">
    <property type="entry name" value="TRANSCRIPTION FACTOR GATA FAMILY MEMBER"/>
    <property type="match status" value="1"/>
</dbReference>
<dbReference type="PANTHER" id="PTHR10071:SF23">
    <property type="entry name" value="TRANSCRIPTION FACTOR GATA-6"/>
    <property type="match status" value="1"/>
</dbReference>
<dbReference type="Pfam" id="PF00320">
    <property type="entry name" value="GATA"/>
    <property type="match status" value="2"/>
</dbReference>
<dbReference type="Pfam" id="PF05349">
    <property type="entry name" value="GATA-N"/>
    <property type="match status" value="1"/>
</dbReference>
<dbReference type="PRINTS" id="PR00619">
    <property type="entry name" value="GATAZNFINGER"/>
</dbReference>
<dbReference type="SMART" id="SM00401">
    <property type="entry name" value="ZnF_GATA"/>
    <property type="match status" value="2"/>
</dbReference>
<dbReference type="SUPFAM" id="SSF57716">
    <property type="entry name" value="Glucocorticoid receptor-like (DNA-binding domain)"/>
    <property type="match status" value="2"/>
</dbReference>
<dbReference type="PROSITE" id="PS00344">
    <property type="entry name" value="GATA_ZN_FINGER_1"/>
    <property type="match status" value="2"/>
</dbReference>
<dbReference type="PROSITE" id="PS50114">
    <property type="entry name" value="GATA_ZN_FINGER_2"/>
    <property type="match status" value="2"/>
</dbReference>
<name>GATA6_HUMAN</name>
<reference key="1">
    <citation type="journal article" date="1996" name="Genomics">
        <title>The human GATA-6 gene: structure, chromosomal location, and regulation of expression by tissue-specific and mitogen-responsive signals.</title>
        <authorList>
            <person name="Suzuki E."/>
            <person name="Evans T."/>
            <person name="Lowry J."/>
            <person name="Truong L."/>
            <person name="Bell D.W."/>
            <person name="Testa J.R."/>
            <person name="Walsh K."/>
        </authorList>
    </citation>
    <scope>NUCLEOTIDE SEQUENCE [MRNA] (ISOFORM 2)</scope>
</reference>
<reference key="2">
    <citation type="journal article" date="1997" name="Biochim. Biophys. Acta">
        <title>Molecular cloning of human GATA-6 DNA binding protein: high levels of expression in heart and gut.</title>
        <authorList>
            <person name="Huggon I.C."/>
            <person name="Davies A."/>
            <person name="Gove C."/>
            <person name="Moscoso G."/>
            <person name="Moniz C."/>
            <person name="Foss Y."/>
            <person name="Farzaneh F."/>
            <person name="Towner P."/>
        </authorList>
    </citation>
    <scope>NUCLEOTIDE SEQUENCE [MRNA] (ISOFORM 2)</scope>
    <source>
        <tissue>Heart</tissue>
    </source>
</reference>
<reference key="3">
    <citation type="journal article" date="1997" name="FEBS Lett.">
        <title>GATA-6 DNA binding protein expressed in human gastric adenocarcinoma MKN45 cells.</title>
        <authorList>
            <person name="Yoshida T."/>
            <person name="Sato R."/>
            <person name="Mahmood S."/>
            <person name="Kawasaki S."/>
            <person name="Futai M."/>
            <person name="Maeda M."/>
        </authorList>
    </citation>
    <scope>NUCLEOTIDE SEQUENCE [MRNA] (ISOFORM 2)</scope>
    <scope>FUNCTION</scope>
</reference>
<reference key="4">
    <citation type="submission" date="2005-12" db="EMBL/GenBank/DDBJ databases">
        <authorList>
            <consortium name="NHLBI resequencing and genotyping service (RS&amp;G)"/>
        </authorList>
    </citation>
    <scope>NUCLEOTIDE SEQUENCE [GENOMIC DNA]</scope>
</reference>
<reference key="5">
    <citation type="journal article" date="2005" name="Nature">
        <title>DNA sequence and analysis of human chromosome 18.</title>
        <authorList>
            <person name="Nusbaum C."/>
            <person name="Zody M.C."/>
            <person name="Borowsky M.L."/>
            <person name="Kamal M."/>
            <person name="Kodira C.D."/>
            <person name="Taylor T.D."/>
            <person name="Whittaker C.A."/>
            <person name="Chang J.L."/>
            <person name="Cuomo C.A."/>
            <person name="Dewar K."/>
            <person name="FitzGerald M.G."/>
            <person name="Yang X."/>
            <person name="Abouelleil A."/>
            <person name="Allen N.R."/>
            <person name="Anderson S."/>
            <person name="Bloom T."/>
            <person name="Bugalter B."/>
            <person name="Butler J."/>
            <person name="Cook A."/>
            <person name="DeCaprio D."/>
            <person name="Engels R."/>
            <person name="Garber M."/>
            <person name="Gnirke A."/>
            <person name="Hafez N."/>
            <person name="Hall J.L."/>
            <person name="Norman C.H."/>
            <person name="Itoh T."/>
            <person name="Jaffe D.B."/>
            <person name="Kuroki Y."/>
            <person name="Lehoczky J."/>
            <person name="Lui A."/>
            <person name="Macdonald P."/>
            <person name="Mauceli E."/>
            <person name="Mikkelsen T.S."/>
            <person name="Naylor J.W."/>
            <person name="Nicol R."/>
            <person name="Nguyen C."/>
            <person name="Noguchi H."/>
            <person name="O'Leary S.B."/>
            <person name="Piqani B."/>
            <person name="Smith C.L."/>
            <person name="Talamas J.A."/>
            <person name="Topham K."/>
            <person name="Totoki Y."/>
            <person name="Toyoda A."/>
            <person name="Wain H.M."/>
            <person name="Young S.K."/>
            <person name="Zeng Q."/>
            <person name="Zimmer A.R."/>
            <person name="Fujiyama A."/>
            <person name="Hattori M."/>
            <person name="Birren B.W."/>
            <person name="Sakaki Y."/>
            <person name="Lander E.S."/>
        </authorList>
    </citation>
    <scope>NUCLEOTIDE SEQUENCE [LARGE SCALE GENOMIC DNA]</scope>
</reference>
<reference key="6">
    <citation type="submission" date="2005-07" db="EMBL/GenBank/DDBJ databases">
        <authorList>
            <person name="Mural R.J."/>
            <person name="Istrail S."/>
            <person name="Sutton G.G."/>
            <person name="Florea L."/>
            <person name="Halpern A.L."/>
            <person name="Mobarry C.M."/>
            <person name="Lippert R."/>
            <person name="Walenz B."/>
            <person name="Shatkay H."/>
            <person name="Dew I."/>
            <person name="Miller J.R."/>
            <person name="Flanigan M.J."/>
            <person name="Edwards N.J."/>
            <person name="Bolanos R."/>
            <person name="Fasulo D."/>
            <person name="Halldorsson B.V."/>
            <person name="Hannenhalli S."/>
            <person name="Turner R."/>
            <person name="Yooseph S."/>
            <person name="Lu F."/>
            <person name="Nusskern D.R."/>
            <person name="Shue B.C."/>
            <person name="Zheng X.H."/>
            <person name="Zhong F."/>
            <person name="Delcher A.L."/>
            <person name="Huson D.H."/>
            <person name="Kravitz S.A."/>
            <person name="Mouchard L."/>
            <person name="Reinert K."/>
            <person name="Remington K.A."/>
            <person name="Clark A.G."/>
            <person name="Waterman M.S."/>
            <person name="Eichler E.E."/>
            <person name="Adams M.D."/>
            <person name="Hunkapiller M.W."/>
            <person name="Myers E.W."/>
            <person name="Venter J.C."/>
        </authorList>
    </citation>
    <scope>NUCLEOTIDE SEQUENCE [LARGE SCALE GENOMIC DNA]</scope>
</reference>
<reference key="7">
    <citation type="journal article" date="1999" name="J. Biol. Chem.">
        <title>The human and mouse GATA-6 genes utilize two promoters and two initiation codons.</title>
        <authorList>
            <person name="Brewer A."/>
            <person name="Gove C."/>
            <person name="Davies A."/>
            <person name="McNulty C."/>
            <person name="Barrow D."/>
            <person name="Koutsourakis M."/>
            <person name="Farzaneh F."/>
            <person name="Pizzey J."/>
            <person name="Bomford A."/>
            <person name="Patient R."/>
        </authorList>
    </citation>
    <scope>ALTERNATIVE INITIATION</scope>
</reference>
<reference key="8">
    <citation type="journal article" date="2006" name="Proc. Natl. Acad. Sci. U.S.A.">
        <title>A conserved role for a GATA transcription factor in regulating epithelial innate immune responses.</title>
        <authorList>
            <person name="Shapira M."/>
            <person name="Hamlin B.J."/>
            <person name="Rong J."/>
            <person name="Chen K."/>
            <person name="Ronen M."/>
            <person name="Tan M.W."/>
        </authorList>
    </citation>
    <scope>FUNCTION</scope>
</reference>
<reference key="9">
    <citation type="journal article" date="2008" name="Proc. Natl. Acad. Sci. U.S.A.">
        <title>A quantitative atlas of mitotic phosphorylation.</title>
        <authorList>
            <person name="Dephoure N."/>
            <person name="Zhou C."/>
            <person name="Villen J."/>
            <person name="Beausoleil S.A."/>
            <person name="Bakalarski C.E."/>
            <person name="Elledge S.J."/>
            <person name="Gygi S.P."/>
        </authorList>
    </citation>
    <scope>PHOSPHORYLATION [LARGE SCALE ANALYSIS] AT SER-268</scope>
    <scope>IDENTIFICATION BY MASS SPECTROMETRY [LARGE SCALE ANALYSIS]</scope>
    <source>
        <tissue>Cervix carcinoma</tissue>
    </source>
</reference>
<reference key="10">
    <citation type="journal article" date="2009" name="Anal. Chem.">
        <title>Lys-N and trypsin cover complementary parts of the phosphoproteome in a refined SCX-based approach.</title>
        <authorList>
            <person name="Gauci S."/>
            <person name="Helbig A.O."/>
            <person name="Slijper M."/>
            <person name="Krijgsveld J."/>
            <person name="Heck A.J."/>
            <person name="Mohammed S."/>
        </authorList>
    </citation>
    <scope>IDENTIFICATION BY MASS SPECTROMETRY [LARGE SCALE ANALYSIS]</scope>
</reference>
<reference key="11">
    <citation type="journal article" date="2009" name="Proc. Natl. Acad. Sci. U.S.A.">
        <title>GATA6 mutations cause human cardiac outflow tract defects by disrupting semaphorin-plexin signaling.</title>
        <authorList>
            <person name="Kodo K."/>
            <person name="Nishizawa T."/>
            <person name="Furutani M."/>
            <person name="Arai S."/>
            <person name="Yamamura E."/>
            <person name="Joo K."/>
            <person name="Takahashi T."/>
            <person name="Matsuoka R."/>
            <person name="Yamagishi H."/>
        </authorList>
    </citation>
    <scope>FUNCTION</scope>
    <scope>SUBCELLULAR LOCATION</scope>
    <scope>VARIANT CTHM HIS-466</scope>
    <scope>VARIANT ARG-15</scope>
    <scope>CHARACTERIZATION OF VARIANT CTHM HIS-466</scope>
</reference>
<reference key="12">
    <citation type="journal article" date="2010" name="Sci. Signal.">
        <title>Quantitative phosphoproteomics reveals widespread full phosphorylation site occupancy during mitosis.</title>
        <authorList>
            <person name="Olsen J.V."/>
            <person name="Vermeulen M."/>
            <person name="Santamaria A."/>
            <person name="Kumar C."/>
            <person name="Miller M.L."/>
            <person name="Jensen L.J."/>
            <person name="Gnad F."/>
            <person name="Cox J."/>
            <person name="Jensen T.S."/>
            <person name="Nigg E.A."/>
            <person name="Brunak S."/>
            <person name="Mann M."/>
        </authorList>
    </citation>
    <scope>IDENTIFICATION BY MASS SPECTROMETRY [LARGE SCALE ANALYSIS]</scope>
    <source>
        <tissue>Cervix carcinoma</tissue>
    </source>
</reference>
<reference key="13">
    <citation type="journal article" date="2017" name="Nat. Struct. Mol. Biol.">
        <title>Site-specific mapping of the human SUMO proteome reveals co-modification with phosphorylation.</title>
        <authorList>
            <person name="Hendriks I.A."/>
            <person name="Lyon D."/>
            <person name="Young C."/>
            <person name="Jensen L.J."/>
            <person name="Vertegaal A.C."/>
            <person name="Nielsen M.L."/>
        </authorList>
    </citation>
    <scope>SUMOYLATION [LARGE SCALE ANALYSIS] AT LYS-429; LYS-473 AND LYS-484</scope>
    <scope>IDENTIFICATION BY MASS SPECTROMETRY [LARGE SCALE ANALYSIS]</scope>
</reference>
<reference key="14">
    <citation type="journal article" date="2020" name="Nat. Commun.">
        <title>Contribution of GATA6 to homeostasis of the human upper pilosebaceous unit and acne pathogenesis.</title>
        <authorList>
            <person name="Oules B."/>
            <person name="Philippeos C."/>
            <person name="Segal J."/>
            <person name="Tihy M."/>
            <person name="Vietri Rudan M."/>
            <person name="Cujba A.M."/>
            <person name="Grange P.A."/>
            <person name="Quist S."/>
            <person name="Natsuga K."/>
            <person name="Deschamps L."/>
            <person name="Dupin N."/>
            <person name="Donati G."/>
            <person name="Watt F.M."/>
        </authorList>
    </citation>
    <scope>FUNCTION</scope>
    <scope>TISSUE SPECIFICITY</scope>
    <scope>INDUCTION BY CUTIBACTERIUM ACNES</scope>
</reference>
<reference key="15">
    <citation type="journal article" date="2010" name="J. Hum. Genet.">
        <title>A novel GATA6 mutation in patients with tetralogy of Fallot or atrial septal defect.</title>
        <authorList>
            <person name="Lin X."/>
            <person name="Huo Z."/>
            <person name="Liu X."/>
            <person name="Zhang Y."/>
            <person name="Li L."/>
            <person name="Zhao H."/>
            <person name="Yan B."/>
            <person name="Liu Y."/>
            <person name="Yang Y."/>
            <person name="Chen Y.H."/>
        </authorList>
    </citation>
    <scope>VARIANT ASD9 ASN-184</scope>
    <scope>VARIANT TOF ASN-184</scope>
    <scope>CHARACTERIZATION OF VARIANT ASD9 ASN-184</scope>
    <scope>VARIANT ARG-15</scope>
</reference>
<reference key="16">
    <citation type="journal article" date="2010" name="Pediatr. Res.">
        <title>Identification of GATA6 sequence variants in patients with congenital heart defects.</title>
        <authorList>
            <person name="Maitra M."/>
            <person name="Koenig S.N."/>
            <person name="Srivastava D."/>
            <person name="Garg V."/>
        </authorList>
    </citation>
    <scope>VARIANT ARG-15</scope>
    <scope>VARIANT AVSD5 VAL-178</scope>
    <scope>VARIANT TOF VAL-198</scope>
    <scope>CHARACTERIZATION OF VARIANT AVSD5 VAL-178</scope>
    <scope>CHARACTERIZATION OF VARIANT TOF VAL-198</scope>
</reference>
<reference key="17">
    <citation type="journal article" date="2012" name="Eur. J. Med. Genet.">
        <title>GATA6 loss-of-function mutation in atrial fibrillation.</title>
        <authorList>
            <person name="Yang Y.Q."/>
            <person name="Li L."/>
            <person name="Wang J."/>
            <person name="Zhang X.L."/>
            <person name="Li R.G."/>
            <person name="Xu Y.J."/>
            <person name="Tan H.W."/>
            <person name="Wang X.H."/>
            <person name="Jiang J.Q."/>
            <person name="Fang W.Y."/>
            <person name="Liu X."/>
        </authorList>
    </citation>
    <scope>VARIANTS ARG-15 AND SER-235</scope>
    <scope>CHARACTERIZATION OF VARIANT SER-235</scope>
    <scope>FUNCTION</scope>
</reference>
<reference key="18">
    <citation type="journal article" date="2012" name="Int. J. Mol. Med.">
        <title>Novel GATA6 loss-of-function mutation responsible for familial atrial fibrillation.</title>
        <authorList>
            <person name="Li J."/>
            <person name="Liu W.D."/>
            <person name="Yang Z.L."/>
            <person name="Yang Y.Q."/>
        </authorList>
    </citation>
    <scope>VARIANT VAL-469</scope>
    <scope>CHARACTERIZATION OF VARIANT VAL-469</scope>
    <scope>FUNCTION</scope>
</reference>
<reference key="19">
    <citation type="journal article" date="2012" name="Nat. Genet.">
        <title>GATA6 haploinsufficiency causes pancreatic agenesis in humans.</title>
        <authorList>
            <person name="Allen H.L."/>
            <person name="Flanagan S.E."/>
            <person name="Shaw-Smith C."/>
            <person name="De Franco E."/>
            <person name="Akerman I."/>
            <person name="Caswell R."/>
            <person name="Ferrer J."/>
            <person name="Hattersley A.T."/>
            <person name="Ellard S."/>
        </authorList>
    </citation>
    <scope>VARIANTS PACHD ALA-452; CYS-456; HIS-456; ASP-466; THR-467 AND GLN-473</scope>
    <scope>CHARACTERIZATION OF VARIANTS PACHD CYS-456; ASP-466; THR-467 AND GLN-473</scope>
</reference>
<reference key="20">
    <citation type="journal article" date="2017" name="Heart Rhythm">
        <title>Gain-of-function mutations in GATA6 lead to atrial fibrillation.</title>
        <authorList>
            <person name="Tucker N.R."/>
            <person name="Mahida S."/>
            <person name="Ye J."/>
            <person name="Abraham E.J."/>
            <person name="Mina J.A."/>
            <person name="Parsons V.A."/>
            <person name="McLellan M.A."/>
            <person name="Shea M.A."/>
            <person name="Hanley A."/>
            <person name="Benjamin E.J."/>
            <person name="Milan D.J."/>
            <person name="Lin H."/>
            <person name="Ellinor P.T."/>
        </authorList>
    </citation>
    <scope>VARIANTS SER-91; THR-177; GLY-543 AND LEU-585</scope>
    <scope>CHARACTERIZATION OF VARIANTS SER-91; THR-177; GLY-543 AND LEU-585</scope>
    <scope>FUNCTION</scope>
    <scope>SUBCELLULAR LOCATION</scope>
</reference>